<geneLocation type="chloroplast"/>
<proteinExistence type="evidence at protein level"/>
<accession>P09974</accession>
<sequence>MTLAFQLAVFALIATSLILLISVPVVFASPDGWSSNKNVVFSGTSLWIGLVFLVGILNSLIS</sequence>
<feature type="chain" id="PRO_0000217730" description="Photosystem II reaction center protein Z">
    <location>
        <begin position="1"/>
        <end position="62"/>
    </location>
</feature>
<feature type="transmembrane region" description="Helical" evidence="1">
    <location>
        <begin position="8"/>
        <end position="28"/>
    </location>
</feature>
<feature type="transmembrane region" description="Helical" evidence="1">
    <location>
        <begin position="41"/>
        <end position="61"/>
    </location>
</feature>
<organism>
    <name type="scientific">Nicotiana tabacum</name>
    <name type="common">Common tobacco</name>
    <dbReference type="NCBI Taxonomy" id="4097"/>
    <lineage>
        <taxon>Eukaryota</taxon>
        <taxon>Viridiplantae</taxon>
        <taxon>Streptophyta</taxon>
        <taxon>Embryophyta</taxon>
        <taxon>Tracheophyta</taxon>
        <taxon>Spermatophyta</taxon>
        <taxon>Magnoliopsida</taxon>
        <taxon>eudicotyledons</taxon>
        <taxon>Gunneridae</taxon>
        <taxon>Pentapetalae</taxon>
        <taxon>asterids</taxon>
        <taxon>lamiids</taxon>
        <taxon>Solanales</taxon>
        <taxon>Solanaceae</taxon>
        <taxon>Nicotianoideae</taxon>
        <taxon>Nicotianeae</taxon>
        <taxon>Nicotiana</taxon>
    </lineage>
</organism>
<evidence type="ECO:0000255" key="1">
    <source>
        <dbReference type="HAMAP-Rule" id="MF_00644"/>
    </source>
</evidence>
<evidence type="ECO:0000269" key="2">
    <source>
    </source>
</evidence>
<evidence type="ECO:0000303" key="3">
    <source>
    </source>
</evidence>
<protein>
    <recommendedName>
        <fullName evidence="1">Photosystem II reaction center protein Z</fullName>
        <shortName evidence="1">PSII-Z</shortName>
    </recommendedName>
</protein>
<reference key="1">
    <citation type="journal article" date="1986" name="EMBO J.">
        <title>The complete nucleotide sequence of the tobacco chloroplast genome: its gene organization and expression.</title>
        <authorList>
            <person name="Shinozaki K."/>
            <person name="Ohme M."/>
            <person name="Tanaka M."/>
            <person name="Wakasugi T."/>
            <person name="Hayashida N."/>
            <person name="Matsubayashi T."/>
            <person name="Zaita N."/>
            <person name="Chunwongse J."/>
            <person name="Obokata J."/>
            <person name="Yamaguchi-Shinozaki K."/>
            <person name="Ohto C."/>
            <person name="Torazawa K."/>
            <person name="Meng B.-Y."/>
            <person name="Sugita M."/>
            <person name="Deno H."/>
            <person name="Kamogashira T."/>
            <person name="Yamada K."/>
            <person name="Kusuda J."/>
            <person name="Takaiwa F."/>
            <person name="Kato A."/>
            <person name="Tohdoh N."/>
            <person name="Shimada H."/>
            <person name="Sugiura M."/>
        </authorList>
    </citation>
    <scope>NUCLEOTIDE SEQUENCE [LARGE SCALE GENOMIC DNA]</scope>
    <source>
        <strain>cv. Bright Yellow 4</strain>
    </source>
</reference>
<reference key="2">
    <citation type="journal article" date="2001" name="Plant Cell">
        <title>The chloroplast gene ycf9 encodes a photosystem II (PSII) core subunit, PsbZ, that participates in PSII supramolecular architecture.</title>
        <authorList>
            <person name="Swiatek M."/>
            <person name="Kuras R."/>
            <person name="Sokolenko A."/>
            <person name="Higgs D."/>
            <person name="Olive J."/>
            <person name="Cinque G."/>
            <person name="Mueller B."/>
            <person name="Eichacker L.A."/>
            <person name="Stern D.B."/>
            <person name="Bassi R."/>
            <person name="Herrmann R.G."/>
            <person name="Wollman F.-A."/>
        </authorList>
    </citation>
    <scope>FUNCTION</scope>
    <scope>SUBUNIT</scope>
    <scope>SUBCELLULAR LOCATION</scope>
    <scope>DISRUPTION PHENOTYPE</scope>
</reference>
<comment type="function">
    <text evidence="1 2">Controls the interaction of photosystem II (PSII) cores with the light-harvesting antenna, aiding in the dissipation of excitation energy within PSII (PubMed:11402165). PSII is a light-driven water plastoquinone oxidoreductase, using light energy to abstract electrons from H(2)O, generating a proton gradient subsequently used for ATP formation (By similarity).</text>
</comment>
<comment type="subunit">
    <text evidence="1">PSII is composed of 1 copy each of membrane proteins PsbA, PsbB, PsbC, PsbD, PsbE, PsbF, PsbH, PsbI, PsbJ, PsbK, PsbL, PsbM, PsbT, PsbY, PsbZ, Psb30/Ycf12, at least 3 peripheral proteins of the oxygen-evolving complex and a large number of cofactors. It forms dimeric complexes.</text>
</comment>
<comment type="subcellular location">
    <subcellularLocation>
        <location evidence="1 2">Plastid</location>
        <location evidence="1 2">Chloroplast thylakoid membrane</location>
        <topology evidence="1">Multi-pass membrane protein</topology>
    </subcellularLocation>
    <text evidence="2">Associated with the photosystem II complex.</text>
</comment>
<comment type="disruption phenotype">
    <text evidence="2">Not essential, plants grow and produce fertile seeds. Plants are pale green under 100 umol photons/m(2)/s at 25 degrees Celsius, pale green and 'dwarfed' under 10 umol photons/m(2)/s at 20 degrees Celsius. Loss of PSII-light harvesting supercomplexes without a decrease of major antenna proteins, in 'dwarf' conditions loss of minor antenna chlorophyll a-b binding proteins CP26 (Lhcb5), decreased levels of CP29 (Lhcb4). Altered phosphorylation state of PSII and LHCII, impaired non-photochemical energy quenching.</text>
</comment>
<comment type="similarity">
    <text evidence="1">Belongs to the PsbZ family.</text>
</comment>
<dbReference type="EMBL" id="Z00044">
    <property type="protein sequence ID" value="CAA77349.1"/>
    <property type="molecule type" value="Genomic_DNA"/>
</dbReference>
<dbReference type="PIR" id="A05189">
    <property type="entry name" value="A05189"/>
</dbReference>
<dbReference type="RefSeq" id="NP_054494.1">
    <property type="nucleotide sequence ID" value="NC_001879.2"/>
</dbReference>
<dbReference type="SMR" id="P09974"/>
<dbReference type="GeneID" id="800480"/>
<dbReference type="KEGG" id="nta:800480"/>
<dbReference type="OMA" id="VACRIRN"/>
<dbReference type="OrthoDB" id="1161947at2759"/>
<dbReference type="Proteomes" id="UP000084051">
    <property type="component" value="Unplaced"/>
</dbReference>
<dbReference type="GO" id="GO:0009535">
    <property type="term" value="C:chloroplast thylakoid membrane"/>
    <property type="evidence" value="ECO:0007669"/>
    <property type="project" value="UniProtKB-SubCell"/>
</dbReference>
<dbReference type="GO" id="GO:0009539">
    <property type="term" value="C:photosystem II reaction center"/>
    <property type="evidence" value="ECO:0007669"/>
    <property type="project" value="InterPro"/>
</dbReference>
<dbReference type="GO" id="GO:0015979">
    <property type="term" value="P:photosynthesis"/>
    <property type="evidence" value="ECO:0007669"/>
    <property type="project" value="UniProtKB-UniRule"/>
</dbReference>
<dbReference type="GO" id="GO:0042549">
    <property type="term" value="P:photosystem II stabilization"/>
    <property type="evidence" value="ECO:0007669"/>
    <property type="project" value="InterPro"/>
</dbReference>
<dbReference type="FunFam" id="1.10.287.740:FF:000001">
    <property type="entry name" value="Photosystem II reaction center protein Z"/>
    <property type="match status" value="1"/>
</dbReference>
<dbReference type="Gene3D" id="1.10.287.740">
    <property type="entry name" value="Photosystem II PsbZ, reaction centre"/>
    <property type="match status" value="1"/>
</dbReference>
<dbReference type="HAMAP" id="MF_00644">
    <property type="entry name" value="PSII_PsbZ"/>
    <property type="match status" value="1"/>
</dbReference>
<dbReference type="InterPro" id="IPR002644">
    <property type="entry name" value="PSII_PsbZ"/>
</dbReference>
<dbReference type="InterPro" id="IPR036512">
    <property type="entry name" value="PSII_PsbZ_sf"/>
</dbReference>
<dbReference type="NCBIfam" id="TIGR03043">
    <property type="entry name" value="PS_II_psbZ"/>
    <property type="match status" value="1"/>
</dbReference>
<dbReference type="PANTHER" id="PTHR34971">
    <property type="entry name" value="PHOTOSYSTEM II REACTION CENTER PROTEIN Z"/>
    <property type="match status" value="1"/>
</dbReference>
<dbReference type="PANTHER" id="PTHR34971:SF2">
    <property type="entry name" value="PHOTOSYSTEM II REACTION CENTER PROTEIN Z"/>
    <property type="match status" value="1"/>
</dbReference>
<dbReference type="Pfam" id="PF01737">
    <property type="entry name" value="Ycf9"/>
    <property type="match status" value="1"/>
</dbReference>
<dbReference type="SUPFAM" id="SSF161055">
    <property type="entry name" value="PsbZ-like"/>
    <property type="match status" value="1"/>
</dbReference>
<gene>
    <name evidence="1 3" type="primary">psbZ</name>
    <name evidence="3" type="synonym">ycf9</name>
</gene>
<keyword id="KW-0150">Chloroplast</keyword>
<keyword id="KW-0472">Membrane</keyword>
<keyword id="KW-0602">Photosynthesis</keyword>
<keyword id="KW-0604">Photosystem II</keyword>
<keyword id="KW-0934">Plastid</keyword>
<keyword id="KW-0674">Reaction center</keyword>
<keyword id="KW-1185">Reference proteome</keyword>
<keyword id="KW-0793">Thylakoid</keyword>
<keyword id="KW-0812">Transmembrane</keyword>
<keyword id="KW-1133">Transmembrane helix</keyword>
<name>PSBZ_TOBAC</name>